<keyword id="KW-0150">Chloroplast</keyword>
<keyword id="KW-0472">Membrane</keyword>
<keyword id="KW-0934">Plastid</keyword>
<keyword id="KW-0793">Thylakoid</keyword>
<keyword id="KW-0812">Transmembrane</keyword>
<keyword id="KW-1133">Transmembrane helix</keyword>
<sequence length="43" mass="4722">METATLVAIFISGLLVSFTGYALYTAFGQPSQQLRDPFEEHGD</sequence>
<proteinExistence type="inferred from homology"/>
<protein>
    <recommendedName>
        <fullName evidence="1">Protein PsbN</fullName>
    </recommendedName>
</protein>
<name>PSBN_MUSCM</name>
<organism>
    <name type="scientific">Muscari comosum</name>
    <name type="common">Tassel grape hyacinth</name>
    <name type="synonym">Leopoldia comosa</name>
    <dbReference type="NCBI Taxonomy" id="81770"/>
    <lineage>
        <taxon>Eukaryota</taxon>
        <taxon>Viridiplantae</taxon>
        <taxon>Streptophyta</taxon>
        <taxon>Embryophyta</taxon>
        <taxon>Tracheophyta</taxon>
        <taxon>Spermatophyta</taxon>
        <taxon>Magnoliopsida</taxon>
        <taxon>Liliopsida</taxon>
        <taxon>Asparagales</taxon>
        <taxon>Hyacinthaceae</taxon>
        <taxon>Hyacinthoideae</taxon>
        <taxon>Hyacintheae</taxon>
        <taxon>Muscari</taxon>
    </lineage>
</organism>
<geneLocation type="chloroplast"/>
<dbReference type="EMBL" id="AY147543">
    <property type="protein sequence ID" value="AAN32272.1"/>
    <property type="molecule type" value="Genomic_DNA"/>
</dbReference>
<dbReference type="SMR" id="Q67HT0"/>
<dbReference type="GO" id="GO:0009535">
    <property type="term" value="C:chloroplast thylakoid membrane"/>
    <property type="evidence" value="ECO:0007669"/>
    <property type="project" value="UniProtKB-SubCell"/>
</dbReference>
<dbReference type="GO" id="GO:0015979">
    <property type="term" value="P:photosynthesis"/>
    <property type="evidence" value="ECO:0007669"/>
    <property type="project" value="InterPro"/>
</dbReference>
<dbReference type="HAMAP" id="MF_00293">
    <property type="entry name" value="PSII_PsbN"/>
    <property type="match status" value="1"/>
</dbReference>
<dbReference type="InterPro" id="IPR003398">
    <property type="entry name" value="PSII_PsbN"/>
</dbReference>
<dbReference type="PANTHER" id="PTHR35326">
    <property type="entry name" value="PROTEIN PSBN"/>
    <property type="match status" value="1"/>
</dbReference>
<dbReference type="PANTHER" id="PTHR35326:SF3">
    <property type="entry name" value="PROTEIN PSBN"/>
    <property type="match status" value="1"/>
</dbReference>
<dbReference type="Pfam" id="PF02468">
    <property type="entry name" value="PsbN"/>
    <property type="match status" value="1"/>
</dbReference>
<reference key="1">
    <citation type="submission" date="2002-09" db="EMBL/GenBank/DDBJ databases">
        <title>Phylogenetic relationships among the major lineages of Asparagales based on a large chloroplast data set.</title>
        <authorList>
            <person name="McPherson M.A."/>
            <person name="Rai H.S."/>
            <person name="Wong W.A."/>
            <person name="Graham S.W."/>
        </authorList>
    </citation>
    <scope>NUCLEOTIDE SEQUENCE [GENOMIC DNA]</scope>
</reference>
<evidence type="ECO:0000255" key="1">
    <source>
        <dbReference type="HAMAP-Rule" id="MF_00293"/>
    </source>
</evidence>
<comment type="function">
    <text evidence="1">May play a role in photosystem I and II biogenesis.</text>
</comment>
<comment type="subcellular location">
    <subcellularLocation>
        <location evidence="1">Plastid</location>
        <location evidence="1">Chloroplast thylakoid membrane</location>
        <topology evidence="1">Single-pass membrane protein</topology>
    </subcellularLocation>
</comment>
<comment type="similarity">
    <text evidence="1">Belongs to the PsbN family.</text>
</comment>
<comment type="caution">
    <text evidence="1">Originally thought to be a component of PSII; based on experiments in Synechocystis, N.tabacum and barley, and its absence from PSII in T.elongatus and T.vulcanus, this is probably not true.</text>
</comment>
<feature type="chain" id="PRO_0000207925" description="Protein PsbN">
    <location>
        <begin position="1"/>
        <end position="43"/>
    </location>
</feature>
<feature type="transmembrane region" description="Helical" evidence="1">
    <location>
        <begin position="7"/>
        <end position="27"/>
    </location>
</feature>
<accession>Q67HT0</accession>
<gene>
    <name evidence="1" type="primary">psbN</name>
</gene>